<organism>
    <name type="scientific">Acinetobacter venetianus (strain ATCC 31012 / DSM 23050 / BCRC 14357 / CCUG 45561 / CIP 110063 / KCTC 2702 / LMG 19082 / RAG-1)</name>
    <dbReference type="NCBI Taxonomy" id="1191460"/>
    <lineage>
        <taxon>Bacteria</taxon>
        <taxon>Pseudomonadati</taxon>
        <taxon>Pseudomonadota</taxon>
        <taxon>Gammaproteobacteria</taxon>
        <taxon>Moraxellales</taxon>
        <taxon>Moraxellaceae</taxon>
        <taxon>Acinetobacter</taxon>
    </lineage>
</organism>
<gene>
    <name evidence="1" type="primary">pgi</name>
</gene>
<feature type="chain" id="PRO_0000180579" description="Glucose-6-phosphate isomerase">
    <location>
        <begin position="1"/>
        <end position="557"/>
    </location>
</feature>
<feature type="active site" description="Proton donor" evidence="1">
    <location>
        <position position="361"/>
    </location>
</feature>
<feature type="active site" evidence="1">
    <location>
        <position position="392"/>
    </location>
</feature>
<feature type="active site" evidence="1">
    <location>
        <position position="520"/>
    </location>
</feature>
<accession>Q9RMC1</accession>
<sequence>MNYKQPLIVKSQQQALSALRNLKMQTQDTHLNQFFSDDSGRFERFSVEQEQLVLDFSKHRIDQNVLNGLVDLAHAQDLTQWIQRLFSLEEINYTEQRAAMHWALRVPEQNQQVLPEITAQVHTQLERMYSLVEKIHAGQYRGATGEVIQDVVNIGVGGSDLGPLMVTHALSDFKVVTAKPLDVHFVSTMDGSQLSDLLHQLRPETTLFIISSKSFGTIDTLSNAQTVRQWLEKALGKNSHVLKHHFIGVSTKPDKMSEWGIAPENQLLLWDWVGGRYSLWSCIGLPIALTVGVDGFKQLLSGAYAIDQHFQTAPFAQNIPVLIGLLGVWNNNFLDIQTHAVLPYDGRLKYFAAYLQQLEMESNGKSTQRSGEKVDSATCPIVWGEVGPNAQHAFYQLLHQGTHKVSCDFIAPVKRYNANHFTYAENAEALIEQHHLALSNCLAQSRLLAFGNQALTADEIEDLPTYKQYEGNQPSSTILLKELNPYSLGMLIATYEHKVFVQSVLWNINPFDQWGVEKGKEIANQLLPILNREQDDLSTFDASTQGLLKILLGKNNG</sequence>
<name>G6PI_ACIVR</name>
<proteinExistence type="inferred from homology"/>
<keyword id="KW-0963">Cytoplasm</keyword>
<keyword id="KW-0312">Gluconeogenesis</keyword>
<keyword id="KW-0324">Glycolysis</keyword>
<keyword id="KW-0413">Isomerase</keyword>
<dbReference type="EC" id="5.3.1.9" evidence="1"/>
<dbReference type="EMBL" id="AJ243431">
    <property type="protein sequence ID" value="CAB57211.1"/>
    <property type="molecule type" value="Genomic_DNA"/>
</dbReference>
<dbReference type="PIR" id="T44843">
    <property type="entry name" value="T44843"/>
</dbReference>
<dbReference type="RefSeq" id="WP_004882099.1">
    <property type="nucleotide sequence ID" value="NZ_AKIQ01000078.1"/>
</dbReference>
<dbReference type="SMR" id="Q9RMC1"/>
<dbReference type="STRING" id="28090.GCA_002119785_01260"/>
<dbReference type="GeneID" id="58196046"/>
<dbReference type="OrthoDB" id="140919at2"/>
<dbReference type="UniPathway" id="UPA00109">
    <property type="reaction ID" value="UER00181"/>
</dbReference>
<dbReference type="UniPathway" id="UPA00138"/>
<dbReference type="GO" id="GO:0005829">
    <property type="term" value="C:cytosol"/>
    <property type="evidence" value="ECO:0007669"/>
    <property type="project" value="TreeGrafter"/>
</dbReference>
<dbReference type="GO" id="GO:0097367">
    <property type="term" value="F:carbohydrate derivative binding"/>
    <property type="evidence" value="ECO:0007669"/>
    <property type="project" value="InterPro"/>
</dbReference>
<dbReference type="GO" id="GO:0004347">
    <property type="term" value="F:glucose-6-phosphate isomerase activity"/>
    <property type="evidence" value="ECO:0007669"/>
    <property type="project" value="UniProtKB-UniRule"/>
</dbReference>
<dbReference type="GO" id="GO:0048029">
    <property type="term" value="F:monosaccharide binding"/>
    <property type="evidence" value="ECO:0007669"/>
    <property type="project" value="TreeGrafter"/>
</dbReference>
<dbReference type="GO" id="GO:0006094">
    <property type="term" value="P:gluconeogenesis"/>
    <property type="evidence" value="ECO:0007669"/>
    <property type="project" value="UniProtKB-UniRule"/>
</dbReference>
<dbReference type="GO" id="GO:0051156">
    <property type="term" value="P:glucose 6-phosphate metabolic process"/>
    <property type="evidence" value="ECO:0007669"/>
    <property type="project" value="TreeGrafter"/>
</dbReference>
<dbReference type="GO" id="GO:0006096">
    <property type="term" value="P:glycolytic process"/>
    <property type="evidence" value="ECO:0007669"/>
    <property type="project" value="UniProtKB-UniRule"/>
</dbReference>
<dbReference type="CDD" id="cd05015">
    <property type="entry name" value="SIS_PGI_1"/>
    <property type="match status" value="1"/>
</dbReference>
<dbReference type="CDD" id="cd05016">
    <property type="entry name" value="SIS_PGI_2"/>
    <property type="match status" value="1"/>
</dbReference>
<dbReference type="Gene3D" id="1.10.1390.10">
    <property type="match status" value="1"/>
</dbReference>
<dbReference type="Gene3D" id="3.40.50.10490">
    <property type="entry name" value="Glucose-6-phosphate isomerase like protein, domain 1"/>
    <property type="match status" value="2"/>
</dbReference>
<dbReference type="HAMAP" id="MF_00473">
    <property type="entry name" value="G6P_isomerase"/>
    <property type="match status" value="1"/>
</dbReference>
<dbReference type="InterPro" id="IPR001672">
    <property type="entry name" value="G6P_Isomerase"/>
</dbReference>
<dbReference type="InterPro" id="IPR023096">
    <property type="entry name" value="G6P_Isomerase_C"/>
</dbReference>
<dbReference type="InterPro" id="IPR018189">
    <property type="entry name" value="Phosphoglucose_isomerase_CS"/>
</dbReference>
<dbReference type="InterPro" id="IPR046348">
    <property type="entry name" value="SIS_dom_sf"/>
</dbReference>
<dbReference type="InterPro" id="IPR035476">
    <property type="entry name" value="SIS_PGI_1"/>
</dbReference>
<dbReference type="InterPro" id="IPR035482">
    <property type="entry name" value="SIS_PGI_2"/>
</dbReference>
<dbReference type="NCBIfam" id="NF001211">
    <property type="entry name" value="PRK00179.1"/>
    <property type="match status" value="1"/>
</dbReference>
<dbReference type="PANTHER" id="PTHR11469">
    <property type="entry name" value="GLUCOSE-6-PHOSPHATE ISOMERASE"/>
    <property type="match status" value="1"/>
</dbReference>
<dbReference type="PANTHER" id="PTHR11469:SF1">
    <property type="entry name" value="GLUCOSE-6-PHOSPHATE ISOMERASE"/>
    <property type="match status" value="1"/>
</dbReference>
<dbReference type="Pfam" id="PF00342">
    <property type="entry name" value="PGI"/>
    <property type="match status" value="1"/>
</dbReference>
<dbReference type="PRINTS" id="PR00662">
    <property type="entry name" value="G6PISOMERASE"/>
</dbReference>
<dbReference type="SUPFAM" id="SSF53697">
    <property type="entry name" value="SIS domain"/>
    <property type="match status" value="1"/>
</dbReference>
<dbReference type="PROSITE" id="PS00765">
    <property type="entry name" value="P_GLUCOSE_ISOMERASE_1"/>
    <property type="match status" value="1"/>
</dbReference>
<dbReference type="PROSITE" id="PS00174">
    <property type="entry name" value="P_GLUCOSE_ISOMERASE_2"/>
    <property type="match status" value="1"/>
</dbReference>
<dbReference type="PROSITE" id="PS51463">
    <property type="entry name" value="P_GLUCOSE_ISOMERASE_3"/>
    <property type="match status" value="1"/>
</dbReference>
<reference key="1">
    <citation type="submission" date="1999-06" db="EMBL/GenBank/DDBJ databases">
        <title>Genomic organization of the wce region of Acinetobacter lwoffii RAG-1 required for emulsan biosynthesis.</title>
        <authorList>
            <person name="Nakar D."/>
            <person name="Gutnick D.L."/>
        </authorList>
    </citation>
    <scope>NUCLEOTIDE SEQUENCE [GENOMIC DNA]</scope>
    <source>
        <strain>ATCC 31012 / DSM 23050 / BCRC 14357 / CCUG 45561 / CIP 110063 / KCTC 2702 / LMG 19082 / RAG-1</strain>
    </source>
</reference>
<evidence type="ECO:0000255" key="1">
    <source>
        <dbReference type="HAMAP-Rule" id="MF_00473"/>
    </source>
</evidence>
<evidence type="ECO:0000305" key="2"/>
<protein>
    <recommendedName>
        <fullName evidence="1">Glucose-6-phosphate isomerase</fullName>
        <shortName evidence="1">GPI</shortName>
        <ecNumber evidence="1">5.3.1.9</ecNumber>
    </recommendedName>
    <alternativeName>
        <fullName evidence="1">Phosphoglucose isomerase</fullName>
        <shortName evidence="1">PGI</shortName>
    </alternativeName>
    <alternativeName>
        <fullName evidence="1">Phosphohexose isomerase</fullName>
        <shortName evidence="1">PHI</shortName>
    </alternativeName>
</protein>
<comment type="function">
    <text evidence="1">Catalyzes the reversible isomerization of glucose-6-phosphate to fructose-6-phosphate.</text>
</comment>
<comment type="catalytic activity">
    <reaction evidence="1">
        <text>alpha-D-glucose 6-phosphate = beta-D-fructose 6-phosphate</text>
        <dbReference type="Rhea" id="RHEA:11816"/>
        <dbReference type="ChEBI" id="CHEBI:57634"/>
        <dbReference type="ChEBI" id="CHEBI:58225"/>
        <dbReference type="EC" id="5.3.1.9"/>
    </reaction>
</comment>
<comment type="pathway">
    <text evidence="1">Carbohydrate biosynthesis; gluconeogenesis.</text>
</comment>
<comment type="pathway">
    <text evidence="1">Carbohydrate degradation; glycolysis; D-glyceraldehyde 3-phosphate and glycerone phosphate from D-glucose: step 2/4.</text>
</comment>
<comment type="subcellular location">
    <subcellularLocation>
        <location evidence="1">Cytoplasm</location>
    </subcellularLocation>
</comment>
<comment type="similarity">
    <text evidence="1 2">Belongs to the GPI family.</text>
</comment>